<organism>
    <name type="scientific">Cyprinus carpio</name>
    <name type="common">Common carp</name>
    <dbReference type="NCBI Taxonomy" id="7962"/>
    <lineage>
        <taxon>Eukaryota</taxon>
        <taxon>Metazoa</taxon>
        <taxon>Chordata</taxon>
        <taxon>Craniata</taxon>
        <taxon>Vertebrata</taxon>
        <taxon>Euteleostomi</taxon>
        <taxon>Actinopterygii</taxon>
        <taxon>Neopterygii</taxon>
        <taxon>Teleostei</taxon>
        <taxon>Ostariophysi</taxon>
        <taxon>Cypriniformes</taxon>
        <taxon>Cyprinidae</taxon>
        <taxon>Cyprininae</taxon>
        <taxon>Cyprinus</taxon>
    </lineage>
</organism>
<proteinExistence type="inferred from homology"/>
<name>CRGM3_CYPCA</name>
<dbReference type="EMBL" id="X55946">
    <property type="protein sequence ID" value="CAA39414.1"/>
    <property type="molecule type" value="Genomic_DNA"/>
</dbReference>
<dbReference type="PIR" id="S18460">
    <property type="entry name" value="S18460"/>
</dbReference>
<dbReference type="SMR" id="P28022"/>
<dbReference type="Proteomes" id="UP000694384">
    <property type="component" value="Unplaced"/>
</dbReference>
<dbReference type="Proteomes" id="UP000694427">
    <property type="component" value="Unplaced"/>
</dbReference>
<dbReference type="Proteomes" id="UP000694700">
    <property type="component" value="Unplaced"/>
</dbReference>
<dbReference type="Proteomes" id="UP000694701">
    <property type="component" value="Unplaced"/>
</dbReference>
<dbReference type="Proteomes" id="UP001155660">
    <property type="component" value="Unplaced"/>
</dbReference>
<dbReference type="GO" id="GO:0005212">
    <property type="term" value="F:structural constituent of eye lens"/>
    <property type="evidence" value="ECO:0007669"/>
    <property type="project" value="UniProtKB-KW"/>
</dbReference>
<dbReference type="GO" id="GO:0002088">
    <property type="term" value="P:lens development in camera-type eye"/>
    <property type="evidence" value="ECO:0007669"/>
    <property type="project" value="TreeGrafter"/>
</dbReference>
<dbReference type="GO" id="GO:0007601">
    <property type="term" value="P:visual perception"/>
    <property type="evidence" value="ECO:0007669"/>
    <property type="project" value="TreeGrafter"/>
</dbReference>
<dbReference type="FunFam" id="2.60.20.10:FF:000001">
    <property type="entry name" value="Crystallin gamma S"/>
    <property type="match status" value="1"/>
</dbReference>
<dbReference type="FunFam" id="2.60.20.10:FF:000003">
    <property type="entry name" value="Crystallin gamma S"/>
    <property type="match status" value="1"/>
</dbReference>
<dbReference type="Gene3D" id="2.60.20.10">
    <property type="entry name" value="Crystallins"/>
    <property type="match status" value="2"/>
</dbReference>
<dbReference type="InterPro" id="IPR050252">
    <property type="entry name" value="Beta/Gamma-Crystallin"/>
</dbReference>
<dbReference type="InterPro" id="IPR001064">
    <property type="entry name" value="Beta/gamma_crystallin"/>
</dbReference>
<dbReference type="InterPro" id="IPR011024">
    <property type="entry name" value="G_crystallin-like"/>
</dbReference>
<dbReference type="PANTHER" id="PTHR11818">
    <property type="entry name" value="BETA/GAMMA CRYSTALLIN"/>
    <property type="match status" value="1"/>
</dbReference>
<dbReference type="PANTHER" id="PTHR11818:SF139">
    <property type="entry name" value="CRYSTALLIN, GAMMA M1-RELATED"/>
    <property type="match status" value="1"/>
</dbReference>
<dbReference type="Pfam" id="PF00030">
    <property type="entry name" value="Crystall"/>
    <property type="match status" value="2"/>
</dbReference>
<dbReference type="PRINTS" id="PR01367">
    <property type="entry name" value="BGCRYSTALLIN"/>
</dbReference>
<dbReference type="SMART" id="SM00247">
    <property type="entry name" value="XTALbg"/>
    <property type="match status" value="2"/>
</dbReference>
<dbReference type="SUPFAM" id="SSF49695">
    <property type="entry name" value="gamma-Crystallin-like"/>
    <property type="match status" value="1"/>
</dbReference>
<dbReference type="PROSITE" id="PS50915">
    <property type="entry name" value="CRYSTALLIN_BETA_GAMMA"/>
    <property type="match status" value="4"/>
</dbReference>
<comment type="function">
    <text>Crystallins are the dominant structural components of the vertebrate eye lens.</text>
</comment>
<comment type="subunit">
    <text evidence="1">Monomer.</text>
</comment>
<comment type="domain">
    <text>Has a two-domain beta-structure, folded into four very similar Greek key motifs.</text>
</comment>
<comment type="similarity">
    <text evidence="3">Belongs to the beta/gamma-crystallin family.</text>
</comment>
<accession>P28022</accession>
<keyword id="KW-0273">Eye lens protein</keyword>
<keyword id="KW-1185">Reference proteome</keyword>
<keyword id="KW-0677">Repeat</keyword>
<evidence type="ECO:0000250" key="1"/>
<evidence type="ECO:0000255" key="2">
    <source>
        <dbReference type="PROSITE-ProRule" id="PRU00028"/>
    </source>
</evidence>
<evidence type="ECO:0000305" key="3"/>
<reference key="1">
    <citation type="journal article" date="1991" name="Biochim. Biophys. Acta">
        <title>Gamma-crystallin genes in carp: cloning and characterization.</title>
        <authorList>
            <person name="Chang T."/>
            <person name="Lin C.L."/>
            <person name="Chang W.C."/>
            <person name="Chen P.H."/>
        </authorList>
    </citation>
    <scope>NUCLEOTIDE SEQUENCE [GENOMIC DNA]</scope>
</reference>
<protein>
    <recommendedName>
        <fullName>Gamma-crystallin M3</fullName>
        <shortName>Gamma-M3</shortName>
    </recommendedName>
</protein>
<feature type="initiator methionine" description="Removed" evidence="1">
    <location>
        <position position="1"/>
    </location>
</feature>
<feature type="chain" id="PRO_0000057576" description="Gamma-crystallin M3">
    <location>
        <begin position="2"/>
        <end position="174"/>
    </location>
</feature>
<feature type="domain" description="Beta/gamma crystallin 'Greek key' 1" evidence="2">
    <location>
        <begin position="2"/>
        <end position="40"/>
    </location>
</feature>
<feature type="domain" description="Beta/gamma crystallin 'Greek key' 2" evidence="2">
    <location>
        <begin position="41"/>
        <end position="82"/>
    </location>
</feature>
<feature type="domain" description="Beta/gamma crystallin 'Greek key' 3" evidence="2">
    <location>
        <begin position="88"/>
        <end position="128"/>
    </location>
</feature>
<feature type="domain" description="Beta/gamma crystallin 'Greek key' 4" evidence="2">
    <location>
        <begin position="129"/>
        <end position="171"/>
    </location>
</feature>
<feature type="region of interest" description="Connecting peptide">
    <location>
        <begin position="83"/>
        <end position="87"/>
    </location>
</feature>
<sequence length="174" mass="20950">MGKIIFYEDRNFQGRSYECSSDCSDMSTYLSRCHSCRVESGCFVVYDVPNYMGNQFFMRRGEYADYMRMGMSDGIRSCRMVPQYRGPYRMRIYERENFGGQMYDLTDDCDSFVDRYRMSDCQSCHVMDGHWLMYEQPHYRGRIVYFRPGEYRSFRDMGYSNVKFSSVRRIMDLC</sequence>